<feature type="chain" id="PRO_0000280636" description="Sharpin">
    <location>
        <begin position="1"/>
        <end position="381"/>
    </location>
</feature>
<feature type="domain" description="Ubiquitin-like">
    <location>
        <begin position="216"/>
        <end position="285"/>
    </location>
</feature>
<feature type="zinc finger region" description="RanBP2-type" evidence="3">
    <location>
        <begin position="342"/>
        <end position="371"/>
    </location>
</feature>
<feature type="region of interest" description="Self-association" evidence="5">
    <location>
        <begin position="1"/>
        <end position="177"/>
    </location>
</feature>
<feature type="region of interest" description="Disordered" evidence="4">
    <location>
        <begin position="121"/>
        <end position="153"/>
    </location>
</feature>
<feature type="region of interest" description="Interaction with SHANK1" evidence="5">
    <location>
        <begin position="172"/>
        <end position="305"/>
    </location>
</feature>
<feature type="compositionally biased region" description="Polar residues" evidence="4">
    <location>
        <begin position="121"/>
        <end position="131"/>
    </location>
</feature>
<feature type="compositionally biased region" description="Pro residues" evidence="4">
    <location>
        <begin position="132"/>
        <end position="142"/>
    </location>
</feature>
<feature type="modified residue" description="Phosphoserine" evidence="2">
    <location>
        <position position="307"/>
    </location>
</feature>
<name>SHRPN_RAT</name>
<dbReference type="EMBL" id="AF203906">
    <property type="protein sequence ID" value="AAG43482.1"/>
    <property type="molecule type" value="mRNA"/>
</dbReference>
<dbReference type="EMBL" id="BC083553">
    <property type="protein sequence ID" value="AAH83553.1"/>
    <property type="molecule type" value="mRNA"/>
</dbReference>
<dbReference type="RefSeq" id="NP_112415.1">
    <property type="nucleotide sequence ID" value="NM_031153.2"/>
</dbReference>
<dbReference type="RefSeq" id="XP_038935874.1">
    <property type="nucleotide sequence ID" value="XM_039079946.2"/>
</dbReference>
<dbReference type="SMR" id="Q9EQL9"/>
<dbReference type="BioGRID" id="249689">
    <property type="interactions" value="3"/>
</dbReference>
<dbReference type="CORUM" id="Q9EQL9"/>
<dbReference type="FunCoup" id="Q9EQL9">
    <property type="interactions" value="1074"/>
</dbReference>
<dbReference type="IntAct" id="Q9EQL9">
    <property type="interactions" value="5"/>
</dbReference>
<dbReference type="STRING" id="10116.ENSRNOP00000018032"/>
<dbReference type="GlyGen" id="Q9EQL9">
    <property type="glycosylation" value="2 sites"/>
</dbReference>
<dbReference type="PhosphoSitePlus" id="Q9EQL9"/>
<dbReference type="jPOST" id="Q9EQL9"/>
<dbReference type="PaxDb" id="10116-ENSRNOP00000018032"/>
<dbReference type="Ensembl" id="ENSRNOT00000018031.5">
    <property type="protein sequence ID" value="ENSRNOP00000018032.3"/>
    <property type="gene ID" value="ENSRNOG00000012812.5"/>
</dbReference>
<dbReference type="GeneID" id="81859"/>
<dbReference type="KEGG" id="rno:81859"/>
<dbReference type="UCSC" id="RGD:631353">
    <property type="organism name" value="rat"/>
</dbReference>
<dbReference type="AGR" id="RGD:631353"/>
<dbReference type="CTD" id="81858"/>
<dbReference type="RGD" id="631353">
    <property type="gene designation" value="Sharpin"/>
</dbReference>
<dbReference type="eggNOG" id="KOG1815">
    <property type="taxonomic scope" value="Eukaryota"/>
</dbReference>
<dbReference type="GeneTree" id="ENSGT00940000161574"/>
<dbReference type="HOGENOM" id="CLU_014998_0_1_1"/>
<dbReference type="InParanoid" id="Q9EQL9"/>
<dbReference type="OMA" id="MCSTEQP"/>
<dbReference type="OrthoDB" id="261960at2759"/>
<dbReference type="PhylomeDB" id="Q9EQL9"/>
<dbReference type="TreeFam" id="TF323486"/>
<dbReference type="UniPathway" id="UPA00143"/>
<dbReference type="PRO" id="PR:Q9EQL9"/>
<dbReference type="Proteomes" id="UP000002494">
    <property type="component" value="Chromosome 7"/>
</dbReference>
<dbReference type="Bgee" id="ENSRNOG00000012812">
    <property type="expression patterns" value="Expressed in testis and 20 other cell types or tissues"/>
</dbReference>
<dbReference type="GO" id="GO:0005829">
    <property type="term" value="C:cytosol"/>
    <property type="evidence" value="ECO:0000250"/>
    <property type="project" value="UniProtKB"/>
</dbReference>
<dbReference type="GO" id="GO:0030425">
    <property type="term" value="C:dendrite"/>
    <property type="evidence" value="ECO:0000314"/>
    <property type="project" value="RGD"/>
</dbReference>
<dbReference type="GO" id="GO:0098978">
    <property type="term" value="C:glutamatergic synapse"/>
    <property type="evidence" value="ECO:0000314"/>
    <property type="project" value="SynGO"/>
</dbReference>
<dbReference type="GO" id="GO:0071797">
    <property type="term" value="C:LUBAC complex"/>
    <property type="evidence" value="ECO:0000250"/>
    <property type="project" value="UniProtKB"/>
</dbReference>
<dbReference type="GO" id="GO:0014069">
    <property type="term" value="C:postsynaptic density"/>
    <property type="evidence" value="ECO:0000314"/>
    <property type="project" value="SynGO"/>
</dbReference>
<dbReference type="GO" id="GO:0042802">
    <property type="term" value="F:identical protein binding"/>
    <property type="evidence" value="ECO:0000353"/>
    <property type="project" value="IntAct"/>
</dbReference>
<dbReference type="GO" id="GO:0031593">
    <property type="term" value="F:polyubiquitin modification-dependent protein binding"/>
    <property type="evidence" value="ECO:0000250"/>
    <property type="project" value="UniProtKB"/>
</dbReference>
<dbReference type="GO" id="GO:0044877">
    <property type="term" value="F:protein-containing complex binding"/>
    <property type="evidence" value="ECO:0000353"/>
    <property type="project" value="RGD"/>
</dbReference>
<dbReference type="GO" id="GO:0030674">
    <property type="term" value="F:protein-macromolecule adaptor activity"/>
    <property type="evidence" value="ECO:0000266"/>
    <property type="project" value="RGD"/>
</dbReference>
<dbReference type="GO" id="GO:0043130">
    <property type="term" value="F:ubiquitin binding"/>
    <property type="evidence" value="ECO:0000318"/>
    <property type="project" value="GO_Central"/>
</dbReference>
<dbReference type="GO" id="GO:0004842">
    <property type="term" value="F:ubiquitin-protein transferase activity"/>
    <property type="evidence" value="ECO:0000318"/>
    <property type="project" value="GO_Central"/>
</dbReference>
<dbReference type="GO" id="GO:0008270">
    <property type="term" value="F:zinc ion binding"/>
    <property type="evidence" value="ECO:0007669"/>
    <property type="project" value="UniProtKB-KW"/>
</dbReference>
<dbReference type="GO" id="GO:0030262">
    <property type="term" value="P:apoptotic nuclear changes"/>
    <property type="evidence" value="ECO:0000266"/>
    <property type="project" value="RGD"/>
</dbReference>
<dbReference type="GO" id="GO:0042742">
    <property type="term" value="P:defense response to bacterium"/>
    <property type="evidence" value="ECO:0000250"/>
    <property type="project" value="UniProtKB"/>
</dbReference>
<dbReference type="GO" id="GO:0008544">
    <property type="term" value="P:epidermis development"/>
    <property type="evidence" value="ECO:0000266"/>
    <property type="project" value="RGD"/>
</dbReference>
<dbReference type="GO" id="GO:0031424">
    <property type="term" value="P:keratinization"/>
    <property type="evidence" value="ECO:0000266"/>
    <property type="project" value="RGD"/>
</dbReference>
<dbReference type="GO" id="GO:0007005">
    <property type="term" value="P:mitochondrion organization"/>
    <property type="evidence" value="ECO:0000266"/>
    <property type="project" value="RGD"/>
</dbReference>
<dbReference type="GO" id="GO:0050728">
    <property type="term" value="P:negative regulation of inflammatory response"/>
    <property type="evidence" value="ECO:0000250"/>
    <property type="project" value="UniProtKB"/>
</dbReference>
<dbReference type="GO" id="GO:0043123">
    <property type="term" value="P:positive regulation of canonical NF-kappaB signal transduction"/>
    <property type="evidence" value="ECO:0000250"/>
    <property type="project" value="UniProtKB"/>
</dbReference>
<dbReference type="GO" id="GO:0043161">
    <property type="term" value="P:proteasome-mediated ubiquitin-dependent protein catabolic process"/>
    <property type="evidence" value="ECO:0000318"/>
    <property type="project" value="GO_Central"/>
</dbReference>
<dbReference type="GO" id="GO:0097039">
    <property type="term" value="P:protein linear polyubiquitination"/>
    <property type="evidence" value="ECO:0000250"/>
    <property type="project" value="UniProtKB"/>
</dbReference>
<dbReference type="GO" id="GO:2000348">
    <property type="term" value="P:regulation of CD40 signaling pathway"/>
    <property type="evidence" value="ECO:0000250"/>
    <property type="project" value="UniProtKB"/>
</dbReference>
<dbReference type="GO" id="GO:0010803">
    <property type="term" value="P:regulation of tumor necrosis factor-mediated signaling pathway"/>
    <property type="evidence" value="ECO:0000250"/>
    <property type="project" value="UniProtKB"/>
</dbReference>
<dbReference type="CDD" id="cd01799">
    <property type="entry name" value="Ubl_HOIL1"/>
    <property type="match status" value="1"/>
</dbReference>
<dbReference type="FunFam" id="3.10.20.90:FF:000130">
    <property type="entry name" value="SHANK-associated RH domain interactor"/>
    <property type="match status" value="1"/>
</dbReference>
<dbReference type="FunFam" id="2.30.29.30:FF:000331">
    <property type="entry name" value="sharpin isoform X1"/>
    <property type="match status" value="1"/>
</dbReference>
<dbReference type="FunFam" id="2.30.30.380:FF:000014">
    <property type="entry name" value="sharpin isoform X1"/>
    <property type="match status" value="1"/>
</dbReference>
<dbReference type="Gene3D" id="3.10.20.90">
    <property type="entry name" value="Phosphatidylinositol 3-kinase Catalytic Subunit, Chain A, domain 1"/>
    <property type="match status" value="1"/>
</dbReference>
<dbReference type="Gene3D" id="2.30.29.30">
    <property type="entry name" value="Pleckstrin-homology domain (PH domain)/Phosphotyrosine-binding domain (PTB)"/>
    <property type="match status" value="1"/>
</dbReference>
<dbReference type="Gene3D" id="2.30.30.380">
    <property type="entry name" value="Zn-finger domain of Sec23/24"/>
    <property type="match status" value="1"/>
</dbReference>
<dbReference type="InterPro" id="IPR051628">
    <property type="entry name" value="LUBAC_E3_Ligases"/>
</dbReference>
<dbReference type="InterPro" id="IPR011993">
    <property type="entry name" value="PH-like_dom_sf"/>
</dbReference>
<dbReference type="InterPro" id="IPR031912">
    <property type="entry name" value="Sharpin_PH"/>
</dbReference>
<dbReference type="InterPro" id="IPR029071">
    <property type="entry name" value="Ubiquitin-like_domsf"/>
</dbReference>
<dbReference type="InterPro" id="IPR001876">
    <property type="entry name" value="Znf_RanBP2"/>
</dbReference>
<dbReference type="InterPro" id="IPR036443">
    <property type="entry name" value="Znf_RanBP2_sf"/>
</dbReference>
<dbReference type="PANTHER" id="PTHR22770:SF43">
    <property type="entry name" value="SHARPIN"/>
    <property type="match status" value="1"/>
</dbReference>
<dbReference type="PANTHER" id="PTHR22770">
    <property type="entry name" value="UBIQUITIN CONJUGATING ENZYME 7 INTERACTING PROTEIN-RELATED"/>
    <property type="match status" value="1"/>
</dbReference>
<dbReference type="Pfam" id="PF25393">
    <property type="entry name" value="LTM"/>
    <property type="match status" value="1"/>
</dbReference>
<dbReference type="Pfam" id="PF16764">
    <property type="entry name" value="Sharpin_PH"/>
    <property type="match status" value="1"/>
</dbReference>
<dbReference type="SMART" id="SM00547">
    <property type="entry name" value="ZnF_RBZ"/>
    <property type="match status" value="1"/>
</dbReference>
<dbReference type="SUPFAM" id="SSF90209">
    <property type="entry name" value="Ran binding protein zinc finger-like"/>
    <property type="match status" value="1"/>
</dbReference>
<dbReference type="SUPFAM" id="SSF54236">
    <property type="entry name" value="Ubiquitin-like"/>
    <property type="match status" value="1"/>
</dbReference>
<dbReference type="PROSITE" id="PS01358">
    <property type="entry name" value="ZF_RANBP2_1"/>
    <property type="match status" value="1"/>
</dbReference>
<dbReference type="PROSITE" id="PS50199">
    <property type="entry name" value="ZF_RANBP2_2"/>
    <property type="match status" value="1"/>
</dbReference>
<proteinExistence type="evidence at protein level"/>
<organism>
    <name type="scientific">Rattus norvegicus</name>
    <name type="common">Rat</name>
    <dbReference type="NCBI Taxonomy" id="10116"/>
    <lineage>
        <taxon>Eukaryota</taxon>
        <taxon>Metazoa</taxon>
        <taxon>Chordata</taxon>
        <taxon>Craniata</taxon>
        <taxon>Vertebrata</taxon>
        <taxon>Euteleostomi</taxon>
        <taxon>Mammalia</taxon>
        <taxon>Eutheria</taxon>
        <taxon>Euarchontoglires</taxon>
        <taxon>Glires</taxon>
        <taxon>Rodentia</taxon>
        <taxon>Myomorpha</taxon>
        <taxon>Muroidea</taxon>
        <taxon>Muridae</taxon>
        <taxon>Murinae</taxon>
        <taxon>Rattus</taxon>
    </lineage>
</organism>
<evidence type="ECO:0000250" key="1"/>
<evidence type="ECO:0000250" key="2">
    <source>
        <dbReference type="UniProtKB" id="Q9H0F6"/>
    </source>
</evidence>
<evidence type="ECO:0000255" key="3">
    <source>
        <dbReference type="PROSITE-ProRule" id="PRU00322"/>
    </source>
</evidence>
<evidence type="ECO:0000256" key="4">
    <source>
        <dbReference type="SAM" id="MobiDB-lite"/>
    </source>
</evidence>
<evidence type="ECO:0000269" key="5">
    <source>
    </source>
</evidence>
<evidence type="ECO:0000269" key="6">
    <source>
    </source>
</evidence>
<sequence length="381" mass="40287">MSPPAGGAAAAADPASPVVLLAVQAAVRLLGAGHEDEAQLRKLQLKADPERPGRFRLGLLGIEPGAVSLEWPLESICYTIRGPNQHELQPPPGGPGTFSVHFLNSEEAQQWAALVRDATAEGQNGNDSTAPVPTPAMCPTSPPCSSVTPTPKATQPEMDLPQGSGNLKKEELATHLAQAIAGGDEKAAAQVAAILAQHHVALNVQLLEAWFPRGPIRLQVTVEDATSVLSSSSSAHVSLQIHPHCSIAALQEQVFSEFGFPPAVQRWVIGRCLCMPERSLASYGVSQDGDPAFLYLLSAPREVSGHSPQHSKMDRKLGCLFPQSLELPHNLQASSSSLPSPPQPGWSCPSCTFINASNRPGCEMCSTQRPCAWDPLTATST</sequence>
<reference key="1">
    <citation type="journal article" date="2001" name="Mol. Cell. Neurosci.">
        <title>Sharpin, a novel postsynaptic density protein that directly interacts with the shank family of proteins.</title>
        <authorList>
            <person name="Lim S."/>
            <person name="Sala C."/>
            <person name="Yoon J."/>
            <person name="Park S."/>
            <person name="Kuroda S."/>
            <person name="Sheng M."/>
            <person name="Kim E."/>
        </authorList>
    </citation>
    <scope>NUCLEOTIDE SEQUENCE [MRNA]</scope>
    <scope>SUBUNIT</scope>
    <scope>INTERACTION WITH SHANK1</scope>
    <scope>SUBCELLULAR LOCATION</scope>
    <scope>TISSUE SPECIFICITY</scope>
    <source>
        <strain>Sprague-Dawley</strain>
        <tissue>Brain</tissue>
    </source>
</reference>
<reference key="2">
    <citation type="journal article" date="2004" name="Genome Res.">
        <title>The status, quality, and expansion of the NIH full-length cDNA project: the Mammalian Gene Collection (MGC).</title>
        <authorList>
            <consortium name="The MGC Project Team"/>
        </authorList>
    </citation>
    <scope>NUCLEOTIDE SEQUENCE [LARGE SCALE MRNA]</scope>
    <source>
        <tissue>Heart</tissue>
    </source>
</reference>
<reference key="3">
    <citation type="journal article" date="2013" name="J. Biol. Chem.">
        <title>SHANK3 gene mutations associated with autism facilitate ligand binding to the Shank3 ankyrin repeat region.</title>
        <authorList>
            <person name="Mameza M.G."/>
            <person name="Dvoretskova E."/>
            <person name="Bamann M."/>
            <person name="Hoenck H.H."/>
            <person name="Gueler T."/>
            <person name="Boeckers T.M."/>
            <person name="Schoen M."/>
            <person name="Verpelli C."/>
            <person name="Sala C."/>
            <person name="Barsukov I."/>
            <person name="Dityatev A."/>
            <person name="Kreienkamp H.J."/>
        </authorList>
    </citation>
    <scope>INTERACTION WITH SHANK3</scope>
</reference>
<accession>Q9EQL9</accession>
<keyword id="KW-0963">Cytoplasm</keyword>
<keyword id="KW-0479">Metal-binding</keyword>
<keyword id="KW-0597">Phosphoprotein</keyword>
<keyword id="KW-1185">Reference proteome</keyword>
<keyword id="KW-0770">Synapse</keyword>
<keyword id="KW-0833">Ubl conjugation pathway</keyword>
<keyword id="KW-0862">Zinc</keyword>
<keyword id="KW-0863">Zinc-finger</keyword>
<protein>
    <recommendedName>
        <fullName>Sharpin</fullName>
    </recommendedName>
    <alternativeName>
        <fullName>Shank-associated RH domain-interacting protein</fullName>
    </alternativeName>
</protein>
<comment type="function">
    <text evidence="2">Component of the LUBAC complex which conjugates linear polyubiquitin chains in a head-to-tail manner to substrates and plays a key role in NF-kappa-B activation and regulation of inflammation. LUBAC conjugates linear polyubiquitin to IKBKG and RIPK1 and is involved in activation of the canonical NF-kappa-B and the JNK signaling pathways. Linear ubiquitination mediated by the LUBAC complex interferes with TNF-induced cell death and thereby prevents inflammation. LUBAC is recruited to the TNF-R1 signaling complex (TNF-RSC) following polyubiquitination of TNF-RSC components by BIRC2 and/or BIRC3 and to conjugate linear polyubiquitin to IKBKG and possibly other components contributing to the stability of the complex. The LUBAC complex is also involved in innate immunity by conjugating linear polyubiquitin chains at the surface of bacteria invading the cytosol to form the ubiquitin coat surrounding bacteria. LUBAC is not able to initiate formation of the bacterial ubiquitin coat, and can only promote formation of linear polyubiquitins on pre-existing ubiquitin. The bacterial ubiquitin coat acts as an 'eat-me' signal for xenophagy and promotes NF-kappa-B activation. Together with OTULIN, the LUBAC complex regulates the canonical Wnt signaling during angiogenesis.</text>
</comment>
<comment type="pathway">
    <text evidence="2">Protein modification; protein ubiquitination.</text>
</comment>
<comment type="subunit">
    <text evidence="2 5 6">Monomer and homodimer (PubMed:11178875). Component of the LUBAC complex (linear ubiquitin chain assembly complex) which consists of SHARPIN, RBCK1 and RNF31 (By similarity). LUBAC has a MW of approximately 600 kDa suggesting a heteromultimeric assembly of its subunits (By similarity). Associates with the TNF-R1 signaling complex (TNF-RSC) in a stimulation-dependent manner (By similarity). Interacts with EYA1, EYA2, SHANK1 and SHANK3 (via ANK repeats) (PubMed:11178875, PubMed:23897824).</text>
</comment>
<comment type="interaction">
    <interactant intactId="EBI-1394695">
        <id>Q9EQL9</id>
    </interactant>
    <interactant intactId="EBI-80909">
        <id>Q9WV48</id>
        <label>Shank1</label>
    </interactant>
    <organismsDiffer>false</organismsDiffer>
    <experiments>7</experiments>
</comment>
<comment type="interaction">
    <interactant intactId="EBI-1394695">
        <id>Q9EQL9</id>
    </interactant>
    <interactant intactId="EBI-1394695">
        <id>Q9EQL9</id>
        <label>Sharpin</label>
    </interactant>
    <organismsDiffer>false</organismsDiffer>
    <experiments>2</experiments>
</comment>
<comment type="subcellular location">
    <subcellularLocation>
        <location evidence="5">Cytoplasm</location>
    </subcellularLocation>
    <subcellularLocation>
        <location evidence="5">Synapse</location>
    </subcellularLocation>
    <text evidence="5">Enriched at synaptic sites in mature neurons where it colocalizes with SHANK1.</text>
</comment>
<comment type="tissue specificity">
    <text evidence="5">Expressed in brain, spleen, lung, heart, skeletal muscle, kidney and testis (at protein level). Expressed in heart and testis.</text>
</comment>
<comment type="domain">
    <text evidence="1">The Ubiquitin-like domain is required for the interaction with RNF31.</text>
</comment>
<comment type="domain">
    <text evidence="1">The RanBP2-type zinc fingers mediate the specific interaction with ubiquitin. Binds preferentially linear polyubiquitin chains and 'Lys-63'-linked polyubiquitin chains over 'Lys-48'-linked polyubiquitin chains. Also binds monoubiquitin (By similarity).</text>
</comment>
<gene>
    <name type="primary">Sharpin</name>
</gene>